<organism>
    <name type="scientific">Drosophila ananassae</name>
    <name type="common">Fruit fly</name>
    <dbReference type="NCBI Taxonomy" id="7217"/>
    <lineage>
        <taxon>Eukaryota</taxon>
        <taxon>Metazoa</taxon>
        <taxon>Ecdysozoa</taxon>
        <taxon>Arthropoda</taxon>
        <taxon>Hexapoda</taxon>
        <taxon>Insecta</taxon>
        <taxon>Pterygota</taxon>
        <taxon>Neoptera</taxon>
        <taxon>Endopterygota</taxon>
        <taxon>Diptera</taxon>
        <taxon>Brachycera</taxon>
        <taxon>Muscomorpha</taxon>
        <taxon>Ephydroidea</taxon>
        <taxon>Drosophilidae</taxon>
        <taxon>Drosophila</taxon>
        <taxon>Sophophora</taxon>
    </lineage>
</organism>
<reference key="1">
    <citation type="journal article" date="2007" name="Nature">
        <title>Evolution of genes and genomes on the Drosophila phylogeny.</title>
        <authorList>
            <consortium name="Drosophila 12 genomes consortium"/>
        </authorList>
    </citation>
    <scope>NUCLEOTIDE SEQUENCE [LARGE SCALE GENOMIC DNA]</scope>
    <source>
        <strain>Tucson 14024-0371.13</strain>
    </source>
</reference>
<comment type="function">
    <text evidence="4">Plays a central role in 2-thiolation of mcm(5)S(2)U at tRNA wobble positions of cytosolic tRNA(Lys), tRNA(Glu) and tRNA(Gln). Also essential during biosynthesis of the molybdenum cofactor. Acts by mediating the C-terminal thiocarboxylation of sulfur carriers URM1 and MOCS2A. Its N-terminus first activates URM1 and MOCS2A as acyl-adenylates (-COAMP), then the persulfide sulfur on the catalytic cysteine is transferred to URM1 and MOCS2A to form thiocarboxylation (-COSH) of their C-terminus. The reaction probably involves hydrogen sulfide that is generated from the persulfide intermediate and that acts as a nucleophile towards URM1 and MOCS2A. Subsequently, a transient disulfide bond is formed. Does not use thiosulfate as sulfur donor; NFS1 probably acting as a sulfur donor for thiocarboxylation reactions.</text>
</comment>
<comment type="catalytic activity">
    <reaction evidence="4">
        <text>[molybdopterin-synthase sulfur-carrier protein]-C-terminal Gly-Gly + ATP + H(+) = [molybdopterin-synthase sulfur-carrier protein]-C-terminal Gly-Gly-AMP + diphosphate</text>
        <dbReference type="Rhea" id="RHEA:43616"/>
        <dbReference type="Rhea" id="RHEA-COMP:12159"/>
        <dbReference type="Rhea" id="RHEA-COMP:12202"/>
        <dbReference type="ChEBI" id="CHEBI:15378"/>
        <dbReference type="ChEBI" id="CHEBI:30616"/>
        <dbReference type="ChEBI" id="CHEBI:33019"/>
        <dbReference type="ChEBI" id="CHEBI:90618"/>
        <dbReference type="ChEBI" id="CHEBI:90778"/>
        <dbReference type="EC" id="2.7.7.80"/>
    </reaction>
</comment>
<comment type="catalytic activity">
    <reaction evidence="4">
        <text>[molybdopterin-synthase sulfur-carrier protein]-C-terminal Gly-Gly-AMP + S-sulfanyl-L-cysteinyl-[cysteine desulfurase] + AH2 = [molybdopterin-synthase sulfur-carrier protein]-C-terminal-Gly-aminoethanethioate + L-cysteinyl-[cysteine desulfurase] + A + AMP + 2 H(+)</text>
        <dbReference type="Rhea" id="RHEA:48612"/>
        <dbReference type="Rhea" id="RHEA-COMP:12157"/>
        <dbReference type="Rhea" id="RHEA-COMP:12158"/>
        <dbReference type="Rhea" id="RHEA-COMP:12159"/>
        <dbReference type="Rhea" id="RHEA-COMP:19907"/>
        <dbReference type="ChEBI" id="CHEBI:13193"/>
        <dbReference type="ChEBI" id="CHEBI:15378"/>
        <dbReference type="ChEBI" id="CHEBI:17499"/>
        <dbReference type="ChEBI" id="CHEBI:29950"/>
        <dbReference type="ChEBI" id="CHEBI:61963"/>
        <dbReference type="ChEBI" id="CHEBI:90618"/>
        <dbReference type="ChEBI" id="CHEBI:232372"/>
        <dbReference type="ChEBI" id="CHEBI:456215"/>
        <dbReference type="EC" id="2.8.1.11"/>
    </reaction>
</comment>
<comment type="cofactor">
    <cofactor evidence="4">
        <name>Zn(2+)</name>
        <dbReference type="ChEBI" id="CHEBI:29105"/>
    </cofactor>
    <text evidence="4">Binds 1 zinc ion per subunit.</text>
</comment>
<comment type="pathway">
    <text evidence="4">tRNA modification; 5-methoxycarbonylmethyl-2-thiouridine-tRNA biosynthesis.</text>
</comment>
<comment type="pathway">
    <text evidence="4">Cofactor biosynthesis; molybdopterin biosynthesis.</text>
</comment>
<comment type="subcellular location">
    <subcellularLocation>
        <location evidence="2">Cytoplasm</location>
        <location evidence="2">Cytosol</location>
    </subcellularLocation>
</comment>
<comment type="similarity">
    <text evidence="4">In the N-terminal section; belongs to the HesA/MoeB/ThiF family. UBA4 subfamily.</text>
</comment>
<evidence type="ECO:0000250" key="1"/>
<evidence type="ECO:0000250" key="2">
    <source>
        <dbReference type="UniProtKB" id="O95396"/>
    </source>
</evidence>
<evidence type="ECO:0000250" key="3">
    <source>
        <dbReference type="UniProtKB" id="Q9VLJ8"/>
    </source>
</evidence>
<evidence type="ECO:0000255" key="4">
    <source>
        <dbReference type="HAMAP-Rule" id="MF_03049"/>
    </source>
</evidence>
<proteinExistence type="inferred from homology"/>
<sequence>MIDSEALENERTKLKREIAELRAALNRKEQCLRDLETTISEATGDEDDVHPDTNGGVCHTQLSNDDIARYSRQLILPDFGVQGQLRLKNSSVLIVGMGGLGCPAAQYLAAAGCGKLGLIDYDEVERSNFHRQILHSEARCGMSKAESARIALLELNQHCEIRCHTRLLNSRNAMHIIRTYDVVLDCSDNVATRYLLNDACVMLRKPLVSGSALKTDGQLTVYCYGNGPCYRCIYPVPPPPEAVTNCGDGGVLGAVTGTIGAMQALEAIKVIVGLGDVLAGRLLIFDGSSCLFRNIRIRSKRPNCHVCSAQPLITELIDYELFCGMHATDKDNPLQLLASEERLDVEEYRNKVQQQPHLLIDVRQPAEFEICQLPDAVNVPLAEVLDDSYLKRFSKQLEDTQLPIILLCRRGNDSQIAVQHVRNRFPKHSIRDIIGGLHAWTHKVDPSFPIY</sequence>
<accession>B3MLX7</accession>
<feature type="chain" id="PRO_0000369202" description="Adenylyltransferase and sulfurtransferase MOCS3">
    <location>
        <begin position="1"/>
        <end position="451"/>
    </location>
</feature>
<feature type="domain" description="Rhodanese" evidence="4">
    <location>
        <begin position="353"/>
        <end position="449"/>
    </location>
</feature>
<feature type="active site" description="Glycyl thioester intermediate; for adenylyltransferase activity" evidence="4">
    <location>
        <position position="246"/>
    </location>
</feature>
<feature type="active site" description="Cysteine persulfide intermediate; for sulfurtransferase activity" evidence="4">
    <location>
        <position position="408"/>
    </location>
</feature>
<feature type="binding site" evidence="4">
    <location>
        <position position="99"/>
    </location>
    <ligand>
        <name>ATP</name>
        <dbReference type="ChEBI" id="CHEBI:30616"/>
    </ligand>
</feature>
<feature type="binding site" evidence="4">
    <location>
        <position position="120"/>
    </location>
    <ligand>
        <name>ATP</name>
        <dbReference type="ChEBI" id="CHEBI:30616"/>
    </ligand>
</feature>
<feature type="binding site" evidence="4">
    <location>
        <begin position="127"/>
        <end position="131"/>
    </location>
    <ligand>
        <name>ATP</name>
        <dbReference type="ChEBI" id="CHEBI:30616"/>
    </ligand>
</feature>
<feature type="binding site" evidence="4">
    <location>
        <position position="144"/>
    </location>
    <ligand>
        <name>ATP</name>
        <dbReference type="ChEBI" id="CHEBI:30616"/>
    </ligand>
</feature>
<feature type="binding site" evidence="4">
    <location>
        <begin position="188"/>
        <end position="189"/>
    </location>
    <ligand>
        <name>ATP</name>
        <dbReference type="ChEBI" id="CHEBI:30616"/>
    </ligand>
</feature>
<feature type="binding site" evidence="4">
    <location>
        <position position="229"/>
    </location>
    <ligand>
        <name>Zn(2+)</name>
        <dbReference type="ChEBI" id="CHEBI:29105"/>
    </ligand>
</feature>
<feature type="binding site" evidence="4">
    <location>
        <position position="232"/>
    </location>
    <ligand>
        <name>Zn(2+)</name>
        <dbReference type="ChEBI" id="CHEBI:29105"/>
    </ligand>
</feature>
<feature type="binding site" evidence="4">
    <location>
        <position position="304"/>
    </location>
    <ligand>
        <name>Zn(2+)</name>
        <dbReference type="ChEBI" id="CHEBI:29105"/>
    </ligand>
</feature>
<feature type="binding site" evidence="4">
    <location>
        <position position="307"/>
    </location>
    <ligand>
        <name>Zn(2+)</name>
        <dbReference type="ChEBI" id="CHEBI:29105"/>
    </ligand>
</feature>
<feature type="modified residue" description="Phosphothreonine" evidence="1">
    <location>
        <position position="60"/>
    </location>
</feature>
<name>MOCS3_DROAN</name>
<dbReference type="EC" id="2.7.7.80" evidence="4"/>
<dbReference type="EC" id="2.8.1.11" evidence="4"/>
<dbReference type="EMBL" id="CH902620">
    <property type="protein sequence ID" value="EDV31805.1"/>
    <property type="molecule type" value="Genomic_DNA"/>
</dbReference>
<dbReference type="SMR" id="B3MLX7"/>
<dbReference type="FunCoup" id="B3MLX7">
    <property type="interactions" value="426"/>
</dbReference>
<dbReference type="STRING" id="7217.B3MLX7"/>
<dbReference type="EnsemblMetazoa" id="FBtr0120233">
    <property type="protein sequence ID" value="FBpp0118725"/>
    <property type="gene ID" value="FBgn0092558"/>
</dbReference>
<dbReference type="EnsemblMetazoa" id="XM_001962548.4">
    <property type="protein sequence ID" value="XP_001962584.2"/>
    <property type="gene ID" value="LOC6498341"/>
</dbReference>
<dbReference type="GeneID" id="6498341"/>
<dbReference type="KEGG" id="dan:6498341"/>
<dbReference type="CTD" id="34187"/>
<dbReference type="eggNOG" id="KOG2017">
    <property type="taxonomic scope" value="Eukaryota"/>
</dbReference>
<dbReference type="HOGENOM" id="CLU_013325_1_2_1"/>
<dbReference type="InParanoid" id="B3MLX7"/>
<dbReference type="OMA" id="IPDVGMD"/>
<dbReference type="OrthoDB" id="10261062at2759"/>
<dbReference type="PhylomeDB" id="B3MLX7"/>
<dbReference type="UniPathway" id="UPA00344"/>
<dbReference type="UniPathway" id="UPA00988"/>
<dbReference type="Proteomes" id="UP000007801">
    <property type="component" value="Unassembled WGS sequence"/>
</dbReference>
<dbReference type="GO" id="GO:0005829">
    <property type="term" value="C:cytosol"/>
    <property type="evidence" value="ECO:0000250"/>
    <property type="project" value="UniProtKB"/>
</dbReference>
<dbReference type="GO" id="GO:0005524">
    <property type="term" value="F:ATP binding"/>
    <property type="evidence" value="ECO:0007669"/>
    <property type="project" value="UniProtKB-KW"/>
</dbReference>
<dbReference type="GO" id="GO:0046872">
    <property type="term" value="F:metal ion binding"/>
    <property type="evidence" value="ECO:0007669"/>
    <property type="project" value="UniProtKB-KW"/>
</dbReference>
<dbReference type="GO" id="GO:0061605">
    <property type="term" value="F:molybdopterin-synthase adenylyltransferase activity"/>
    <property type="evidence" value="ECO:0007669"/>
    <property type="project" value="UniProtKB-EC"/>
</dbReference>
<dbReference type="GO" id="GO:0061604">
    <property type="term" value="F:molybdopterin-synthase sulfurtransferase activity"/>
    <property type="evidence" value="ECO:0000250"/>
    <property type="project" value="UniProtKB"/>
</dbReference>
<dbReference type="GO" id="GO:0004792">
    <property type="term" value="F:thiosulfate-cyanide sulfurtransferase activity"/>
    <property type="evidence" value="ECO:0007669"/>
    <property type="project" value="TreeGrafter"/>
</dbReference>
<dbReference type="GO" id="GO:0042292">
    <property type="term" value="F:URM1 activating enzyme activity"/>
    <property type="evidence" value="ECO:0007669"/>
    <property type="project" value="TreeGrafter"/>
</dbReference>
<dbReference type="GO" id="GO:0006777">
    <property type="term" value="P:Mo-molybdopterin cofactor biosynthetic process"/>
    <property type="evidence" value="ECO:0000250"/>
    <property type="project" value="UniProtKB"/>
</dbReference>
<dbReference type="GO" id="GO:0032447">
    <property type="term" value="P:protein urmylation"/>
    <property type="evidence" value="ECO:0007669"/>
    <property type="project" value="EnsemblMetazoa"/>
</dbReference>
<dbReference type="GO" id="GO:0002143">
    <property type="term" value="P:tRNA wobble position uridine thiolation"/>
    <property type="evidence" value="ECO:0007669"/>
    <property type="project" value="InterPro"/>
</dbReference>
<dbReference type="CDD" id="cd01526">
    <property type="entry name" value="RHOD_ThiF"/>
    <property type="match status" value="1"/>
</dbReference>
<dbReference type="CDD" id="cd00757">
    <property type="entry name" value="ThiF_MoeB_HesA_family"/>
    <property type="match status" value="1"/>
</dbReference>
<dbReference type="FunFam" id="3.40.250.10:FF:000014">
    <property type="entry name" value="Adenylyltransferase and sulfurtransferase MOCS3"/>
    <property type="match status" value="1"/>
</dbReference>
<dbReference type="FunFam" id="3.40.50.720:FF:000206">
    <property type="entry name" value="Adenylyltransferase and sulfurtransferase MOCS3"/>
    <property type="match status" value="1"/>
</dbReference>
<dbReference type="Gene3D" id="3.40.50.720">
    <property type="entry name" value="NAD(P)-binding Rossmann-like Domain"/>
    <property type="match status" value="1"/>
</dbReference>
<dbReference type="Gene3D" id="3.40.250.10">
    <property type="entry name" value="Rhodanese-like domain"/>
    <property type="match status" value="1"/>
</dbReference>
<dbReference type="HAMAP" id="MF_03049">
    <property type="entry name" value="MOCS3_Uba4"/>
    <property type="match status" value="1"/>
</dbReference>
<dbReference type="InterPro" id="IPR028885">
    <property type="entry name" value="MOCS3/Uba4"/>
</dbReference>
<dbReference type="InterPro" id="IPR001763">
    <property type="entry name" value="Rhodanese-like_dom"/>
</dbReference>
<dbReference type="InterPro" id="IPR036873">
    <property type="entry name" value="Rhodanese-like_dom_sf"/>
</dbReference>
<dbReference type="InterPro" id="IPR045886">
    <property type="entry name" value="ThiF/MoeB/HesA"/>
</dbReference>
<dbReference type="InterPro" id="IPR000594">
    <property type="entry name" value="ThiF_NAD_FAD-bd"/>
</dbReference>
<dbReference type="InterPro" id="IPR035985">
    <property type="entry name" value="Ubiquitin-activating_enz"/>
</dbReference>
<dbReference type="NCBIfam" id="NF004281">
    <property type="entry name" value="PRK05690.1"/>
    <property type="match status" value="1"/>
</dbReference>
<dbReference type="PANTHER" id="PTHR10953:SF102">
    <property type="entry name" value="ADENYLYLTRANSFERASE AND SULFURTRANSFERASE MOCS3"/>
    <property type="match status" value="1"/>
</dbReference>
<dbReference type="PANTHER" id="PTHR10953">
    <property type="entry name" value="UBIQUITIN-ACTIVATING ENZYME E1"/>
    <property type="match status" value="1"/>
</dbReference>
<dbReference type="Pfam" id="PF00581">
    <property type="entry name" value="Rhodanese"/>
    <property type="match status" value="1"/>
</dbReference>
<dbReference type="Pfam" id="PF00899">
    <property type="entry name" value="ThiF"/>
    <property type="match status" value="1"/>
</dbReference>
<dbReference type="SMART" id="SM00450">
    <property type="entry name" value="RHOD"/>
    <property type="match status" value="1"/>
</dbReference>
<dbReference type="SUPFAM" id="SSF69572">
    <property type="entry name" value="Activating enzymes of the ubiquitin-like proteins"/>
    <property type="match status" value="1"/>
</dbReference>
<dbReference type="PROSITE" id="PS50206">
    <property type="entry name" value="RHODANESE_3"/>
    <property type="match status" value="1"/>
</dbReference>
<protein>
    <recommendedName>
        <fullName evidence="4">Adenylyltransferase and sulfurtransferase MOCS3</fullName>
    </recommendedName>
    <alternativeName>
        <fullName evidence="4">Molybdenum cofactor synthesis protein 3</fullName>
    </alternativeName>
    <alternativeName>
        <fullName evidence="3">Ubiquitin activating enzyme 4</fullName>
    </alternativeName>
    <domain>
        <recommendedName>
            <fullName evidence="4">Molybdopterin-synthase adenylyltransferase</fullName>
            <ecNumber evidence="4">2.7.7.80</ecNumber>
        </recommendedName>
        <alternativeName>
            <fullName evidence="4">Adenylyltransferase MOCS3</fullName>
        </alternativeName>
        <alternativeName>
            <fullName evidence="4">Sulfur carrier protein MOCS2A adenylyltransferase</fullName>
        </alternativeName>
    </domain>
    <domain>
        <recommendedName>
            <fullName evidence="4">Molybdopterin-synthase sulfurtransferase</fullName>
            <ecNumber evidence="4">2.8.1.11</ecNumber>
        </recommendedName>
        <alternativeName>
            <fullName evidence="4">Sulfur carrier protein MOCS2A sulfurtransferase</fullName>
        </alternativeName>
        <alternativeName>
            <fullName evidence="4">Sulfurtransferase MOCS3</fullName>
        </alternativeName>
    </domain>
</protein>
<keyword id="KW-0067">ATP-binding</keyword>
<keyword id="KW-0963">Cytoplasm</keyword>
<keyword id="KW-0479">Metal-binding</keyword>
<keyword id="KW-0501">Molybdenum cofactor biosynthesis</keyword>
<keyword id="KW-0511">Multifunctional enzyme</keyword>
<keyword id="KW-0547">Nucleotide-binding</keyword>
<keyword id="KW-0548">Nucleotidyltransferase</keyword>
<keyword id="KW-0597">Phosphoprotein</keyword>
<keyword id="KW-1185">Reference proteome</keyword>
<keyword id="KW-0808">Transferase</keyword>
<keyword id="KW-0819">tRNA processing</keyword>
<keyword id="KW-0862">Zinc</keyword>
<gene>
    <name evidence="3" type="primary">Uba4</name>
    <name type="ORF">GF15533</name>
</gene>